<organism>
    <name type="scientific">Arabidopsis thaliana</name>
    <name type="common">Mouse-ear cress</name>
    <dbReference type="NCBI Taxonomy" id="3702"/>
    <lineage>
        <taxon>Eukaryota</taxon>
        <taxon>Viridiplantae</taxon>
        <taxon>Streptophyta</taxon>
        <taxon>Embryophyta</taxon>
        <taxon>Tracheophyta</taxon>
        <taxon>Spermatophyta</taxon>
        <taxon>Magnoliopsida</taxon>
        <taxon>eudicotyledons</taxon>
        <taxon>Gunneridae</taxon>
        <taxon>Pentapetalae</taxon>
        <taxon>rosids</taxon>
        <taxon>malvids</taxon>
        <taxon>Brassicales</taxon>
        <taxon>Brassicaceae</taxon>
        <taxon>Camelineae</taxon>
        <taxon>Arabidopsis</taxon>
    </lineage>
</organism>
<comment type="function">
    <text evidence="1">Probable mitochondrial adenylate carrier that catalyzes the transport of ATP, ADP and AMP.</text>
</comment>
<comment type="subcellular location">
    <subcellularLocation>
        <location evidence="1">Mitochondrion inner membrane</location>
        <topology evidence="1">Multi-pass membrane protein</topology>
    </subcellularLocation>
</comment>
<comment type="similarity">
    <text evidence="3">Belongs to the mitochondrial carrier (TC 2.A.29) family.</text>
</comment>
<comment type="sequence caution" evidence="3">
    <conflict type="miscellaneous discrepancy">
        <sequence resource="EMBL-CDS" id="BAD43860"/>
    </conflict>
    <text>Sequencing errors.</text>
</comment>
<comment type="sequence caution" evidence="3">
    <conflict type="miscellaneous discrepancy">
        <sequence resource="EMBL-CDS" id="BAD43892"/>
    </conflict>
    <text>Sequencing errors.</text>
</comment>
<evidence type="ECO:0000250" key="1"/>
<evidence type="ECO:0000255" key="2"/>
<evidence type="ECO:0000305" key="3"/>
<name>BRTL2_ARATH</name>
<feature type="chain" id="PRO_0000420804" description="Probable mitochondrial adenine nucleotide transporter BTL2">
    <location>
        <begin position="1"/>
        <end position="418"/>
    </location>
</feature>
<feature type="transmembrane region" description="Helical; Name=1" evidence="2">
    <location>
        <begin position="127"/>
        <end position="147"/>
    </location>
</feature>
<feature type="transmembrane region" description="Helical; Name=2" evidence="2">
    <location>
        <begin position="180"/>
        <end position="200"/>
    </location>
</feature>
<feature type="transmembrane region" description="Helical; Name=3" evidence="2">
    <location>
        <begin position="221"/>
        <end position="241"/>
    </location>
</feature>
<feature type="transmembrane region" description="Helical; Name=4" evidence="2">
    <location>
        <begin position="276"/>
        <end position="296"/>
    </location>
</feature>
<feature type="transmembrane region" description="Helical; Name=5" evidence="2">
    <location>
        <begin position="335"/>
        <end position="355"/>
    </location>
</feature>
<feature type="transmembrane region" description="Helical; Name=6" evidence="2">
    <location>
        <begin position="383"/>
        <end position="403"/>
    </location>
</feature>
<feature type="repeat" description="Solcar 1">
    <location>
        <begin position="122"/>
        <end position="205"/>
    </location>
</feature>
<feature type="repeat" description="Solcar 2">
    <location>
        <begin position="215"/>
        <end position="300"/>
    </location>
</feature>
<feature type="repeat" description="Solcar 3">
    <location>
        <begin position="329"/>
        <end position="414"/>
    </location>
</feature>
<gene>
    <name type="ordered locus">At1g78180</name>
    <name type="ORF">T11I11.120</name>
</gene>
<keyword id="KW-0472">Membrane</keyword>
<keyword id="KW-0496">Mitochondrion</keyword>
<keyword id="KW-0999">Mitochondrion inner membrane</keyword>
<keyword id="KW-1185">Reference proteome</keyword>
<keyword id="KW-0677">Repeat</keyword>
<keyword id="KW-0812">Transmembrane</keyword>
<keyword id="KW-1133">Transmembrane helix</keyword>
<keyword id="KW-0813">Transport</keyword>
<protein>
    <recommendedName>
        <fullName>Probable mitochondrial adenine nucleotide transporter BTL2</fullName>
    </recommendedName>
    <alternativeName>
        <fullName>Adenine nucleotide transporter BT1-like protein 2</fullName>
    </alternativeName>
</protein>
<sequence length="418" mass="45822">MSGLDIYPHDPSSSSSTSSIDLSNEAFFSTGGLFLEPPGVSSSFFDSISSKCSDSEPLHFPGYWRNKTRLRSGKNFMFLSVSLSKDRSEQQCKKALAQNDEIPGKDNRKRSVIGGVRRRGTMNTRKHLWAGAVAAMVSKTFLAPLERLKLEYTVRGEQRNLLVVAKSIATTQGLTGFWKGNLLNVLRTAPFKAVNFCAYDTYRKQLLKIAGNQEATNFERFVAGAAAGITATVLCLPLDTIRTKLVARGGEALGGIGGAFRYMIQTEGLFSLYKGLVPSIASMALSGAVFYGVYDILKSSFLHTPEGRKRLIDMKQQGQELNALDRLELGPIRTLMYGAIAGACTEVATYPFEVVRRQLQMQMGKNKLNALAMGFNIIERGGIPALYAGLLPSLLQVLPSASISYFVYECMKIVLKVE</sequence>
<reference key="1">
    <citation type="journal article" date="2000" name="Nature">
        <title>Sequence and analysis of chromosome 1 of the plant Arabidopsis thaliana.</title>
        <authorList>
            <person name="Theologis A."/>
            <person name="Ecker J.R."/>
            <person name="Palm C.J."/>
            <person name="Federspiel N.A."/>
            <person name="Kaul S."/>
            <person name="White O."/>
            <person name="Alonso J."/>
            <person name="Altafi H."/>
            <person name="Araujo R."/>
            <person name="Bowman C.L."/>
            <person name="Brooks S.Y."/>
            <person name="Buehler E."/>
            <person name="Chan A."/>
            <person name="Chao Q."/>
            <person name="Chen H."/>
            <person name="Cheuk R.F."/>
            <person name="Chin C.W."/>
            <person name="Chung M.K."/>
            <person name="Conn L."/>
            <person name="Conway A.B."/>
            <person name="Conway A.R."/>
            <person name="Creasy T.H."/>
            <person name="Dewar K."/>
            <person name="Dunn P."/>
            <person name="Etgu P."/>
            <person name="Feldblyum T.V."/>
            <person name="Feng J.-D."/>
            <person name="Fong B."/>
            <person name="Fujii C.Y."/>
            <person name="Gill J.E."/>
            <person name="Goldsmith A.D."/>
            <person name="Haas B."/>
            <person name="Hansen N.F."/>
            <person name="Hughes B."/>
            <person name="Huizar L."/>
            <person name="Hunter J.L."/>
            <person name="Jenkins J."/>
            <person name="Johnson-Hopson C."/>
            <person name="Khan S."/>
            <person name="Khaykin E."/>
            <person name="Kim C.J."/>
            <person name="Koo H.L."/>
            <person name="Kremenetskaia I."/>
            <person name="Kurtz D.B."/>
            <person name="Kwan A."/>
            <person name="Lam B."/>
            <person name="Langin-Hooper S."/>
            <person name="Lee A."/>
            <person name="Lee J.M."/>
            <person name="Lenz C.A."/>
            <person name="Li J.H."/>
            <person name="Li Y.-P."/>
            <person name="Lin X."/>
            <person name="Liu S.X."/>
            <person name="Liu Z.A."/>
            <person name="Luros J.S."/>
            <person name="Maiti R."/>
            <person name="Marziali A."/>
            <person name="Militscher J."/>
            <person name="Miranda M."/>
            <person name="Nguyen M."/>
            <person name="Nierman W.C."/>
            <person name="Osborne B.I."/>
            <person name="Pai G."/>
            <person name="Peterson J."/>
            <person name="Pham P.K."/>
            <person name="Rizzo M."/>
            <person name="Rooney T."/>
            <person name="Rowley D."/>
            <person name="Sakano H."/>
            <person name="Salzberg S.L."/>
            <person name="Schwartz J.R."/>
            <person name="Shinn P."/>
            <person name="Southwick A.M."/>
            <person name="Sun H."/>
            <person name="Tallon L.J."/>
            <person name="Tambunga G."/>
            <person name="Toriumi M.J."/>
            <person name="Town C.D."/>
            <person name="Utterback T."/>
            <person name="Van Aken S."/>
            <person name="Vaysberg M."/>
            <person name="Vysotskaia V.S."/>
            <person name="Walker M."/>
            <person name="Wu D."/>
            <person name="Yu G."/>
            <person name="Fraser C.M."/>
            <person name="Venter J.C."/>
            <person name="Davis R.W."/>
        </authorList>
    </citation>
    <scope>NUCLEOTIDE SEQUENCE [LARGE SCALE GENOMIC DNA]</scope>
    <source>
        <strain>cv. Columbia</strain>
    </source>
</reference>
<reference key="2">
    <citation type="journal article" date="2017" name="Plant J.">
        <title>Araport11: a complete reannotation of the Arabidopsis thaliana reference genome.</title>
        <authorList>
            <person name="Cheng C.Y."/>
            <person name="Krishnakumar V."/>
            <person name="Chan A.P."/>
            <person name="Thibaud-Nissen F."/>
            <person name="Schobel S."/>
            <person name="Town C.D."/>
        </authorList>
    </citation>
    <scope>GENOME REANNOTATION</scope>
    <source>
        <strain>cv. Columbia</strain>
    </source>
</reference>
<reference key="3">
    <citation type="submission" date="2004-09" db="EMBL/GenBank/DDBJ databases">
        <title>Large-scale analysis of RIKEN Arabidopsis full-length (RAFL) cDNAs.</title>
        <authorList>
            <person name="Totoki Y."/>
            <person name="Seki M."/>
            <person name="Ishida J."/>
            <person name="Nakajima M."/>
            <person name="Enju A."/>
            <person name="Kamiya A."/>
            <person name="Narusaka M."/>
            <person name="Shin-i T."/>
            <person name="Nakagawa M."/>
            <person name="Sakamoto N."/>
            <person name="Oishi K."/>
            <person name="Kohara Y."/>
            <person name="Kobayashi M."/>
            <person name="Toyoda A."/>
            <person name="Sakaki Y."/>
            <person name="Sakurai T."/>
            <person name="Iida K."/>
            <person name="Akiyama K."/>
            <person name="Satou M."/>
            <person name="Toyoda T."/>
            <person name="Konagaya A."/>
            <person name="Carninci P."/>
            <person name="Kawai J."/>
            <person name="Hayashizaki Y."/>
            <person name="Shinozaki K."/>
        </authorList>
    </citation>
    <scope>NUCLEOTIDE SEQUENCE [LARGE SCALE MRNA]</scope>
    <source>
        <strain>cv. Columbia</strain>
    </source>
</reference>
<reference key="4">
    <citation type="journal article" date="2004" name="Trends Plant Sci.">
        <title>The growing family of mitochondrial carriers in Arabidopsis.</title>
        <authorList>
            <person name="Picault N."/>
            <person name="Hodges M."/>
            <person name="Palmieri L."/>
            <person name="Palmieri F."/>
        </authorList>
    </citation>
    <scope>GENE FAMILY</scope>
</reference>
<dbReference type="EMBL" id="AC012680">
    <property type="protein sequence ID" value="AAG52097.1"/>
    <property type="molecule type" value="Genomic_DNA"/>
</dbReference>
<dbReference type="EMBL" id="CP002684">
    <property type="protein sequence ID" value="AEE36078.1"/>
    <property type="molecule type" value="Genomic_DNA"/>
</dbReference>
<dbReference type="EMBL" id="AK176097">
    <property type="protein sequence ID" value="BAD43860.1"/>
    <property type="status" value="ALT_SEQ"/>
    <property type="molecule type" value="mRNA"/>
</dbReference>
<dbReference type="EMBL" id="AK176129">
    <property type="protein sequence ID" value="BAD43892.1"/>
    <property type="status" value="ALT_SEQ"/>
    <property type="molecule type" value="mRNA"/>
</dbReference>
<dbReference type="PIR" id="B96811">
    <property type="entry name" value="B96811"/>
</dbReference>
<dbReference type="RefSeq" id="NP_565171.4">
    <property type="nucleotide sequence ID" value="NM_106468.4"/>
</dbReference>
<dbReference type="SMR" id="Q9C9R4"/>
<dbReference type="FunCoup" id="Q9C9R4">
    <property type="interactions" value="311"/>
</dbReference>
<dbReference type="STRING" id="3702.Q9C9R4"/>
<dbReference type="PaxDb" id="3702-AT1G78180.1"/>
<dbReference type="ProteomicsDB" id="240707"/>
<dbReference type="EnsemblPlants" id="AT1G78180.1">
    <property type="protein sequence ID" value="AT1G78180.1"/>
    <property type="gene ID" value="AT1G78180"/>
</dbReference>
<dbReference type="GeneID" id="844154"/>
<dbReference type="Gramene" id="AT1G78180.1">
    <property type="protein sequence ID" value="AT1G78180.1"/>
    <property type="gene ID" value="AT1G78180"/>
</dbReference>
<dbReference type="KEGG" id="ath:AT1G78180"/>
<dbReference type="Araport" id="AT1G78180"/>
<dbReference type="TAIR" id="AT1G78180"/>
<dbReference type="eggNOG" id="KOG0752">
    <property type="taxonomic scope" value="Eukaryota"/>
</dbReference>
<dbReference type="eggNOG" id="KOG0764">
    <property type="taxonomic scope" value="Eukaryota"/>
</dbReference>
<dbReference type="HOGENOM" id="CLU_015166_10_4_1"/>
<dbReference type="InParanoid" id="Q9C9R4"/>
<dbReference type="OMA" id="LAMGFNI"/>
<dbReference type="OrthoDB" id="270584at2759"/>
<dbReference type="PhylomeDB" id="Q9C9R4"/>
<dbReference type="PRO" id="PR:Q9C9R4"/>
<dbReference type="Proteomes" id="UP000006548">
    <property type="component" value="Chromosome 1"/>
</dbReference>
<dbReference type="ExpressionAtlas" id="Q9C9R4">
    <property type="expression patterns" value="baseline and differential"/>
</dbReference>
<dbReference type="GO" id="GO:0009941">
    <property type="term" value="C:chloroplast envelope"/>
    <property type="evidence" value="ECO:0007005"/>
    <property type="project" value="TAIR"/>
</dbReference>
<dbReference type="GO" id="GO:0005743">
    <property type="term" value="C:mitochondrial inner membrane"/>
    <property type="evidence" value="ECO:0007669"/>
    <property type="project" value="UniProtKB-SubCell"/>
</dbReference>
<dbReference type="GO" id="GO:0055085">
    <property type="term" value="P:transmembrane transport"/>
    <property type="evidence" value="ECO:0007669"/>
    <property type="project" value="InterPro"/>
</dbReference>
<dbReference type="FunFam" id="1.50.40.10:FF:000098">
    <property type="entry name" value="Mitochondrial substrate carrier family protein"/>
    <property type="match status" value="1"/>
</dbReference>
<dbReference type="Gene3D" id="1.50.40.10">
    <property type="entry name" value="Mitochondrial carrier domain"/>
    <property type="match status" value="1"/>
</dbReference>
<dbReference type="InterPro" id="IPR002067">
    <property type="entry name" value="Mit_carrier"/>
</dbReference>
<dbReference type="InterPro" id="IPR018108">
    <property type="entry name" value="Mitochondrial_sb/sol_carrier"/>
</dbReference>
<dbReference type="InterPro" id="IPR023395">
    <property type="entry name" value="Mt_carrier_dom_sf"/>
</dbReference>
<dbReference type="PANTHER" id="PTHR24089">
    <property type="entry name" value="SOLUTE CARRIER FAMILY 25"/>
    <property type="match status" value="1"/>
</dbReference>
<dbReference type="Pfam" id="PF00153">
    <property type="entry name" value="Mito_carr"/>
    <property type="match status" value="3"/>
</dbReference>
<dbReference type="PRINTS" id="PR00926">
    <property type="entry name" value="MITOCARRIER"/>
</dbReference>
<dbReference type="SUPFAM" id="SSF103506">
    <property type="entry name" value="Mitochondrial carrier"/>
    <property type="match status" value="1"/>
</dbReference>
<dbReference type="PROSITE" id="PS50920">
    <property type="entry name" value="SOLCAR"/>
    <property type="match status" value="3"/>
</dbReference>
<accession>Q9C9R4</accession>
<accession>Q67ZI8</accession>
<proteinExistence type="evidence at transcript level"/>